<gene>
    <name evidence="1" type="primary">ALG6</name>
    <name type="ORF">RCJMB04_6f21</name>
</gene>
<comment type="function">
    <text evidence="1">Dolichyl pyrophosphate Man9GlcNAc2 alpha-1,3-glucosyltransferase that operates in the biosynthetic pathway of dolichol-linked oligosaccharides, the glycan precursors employed in protein asparagine (N)-glycosylation. The assembly of dolichol-linked oligosaccharides begins on the cytosolic side of the endoplasmic reticulum membrane and finishes in its lumen. The sequential addition of sugars to dolichol pyrophosphate produces dolichol-linked oligosaccharides containing fourteen sugars, including two GlcNAcs, nine mannoses and three glucoses. Once assembled, the oligosaccharide is transferred from the lipid to nascent proteins by oligosaccharyltransferases. In the lumen of the endoplasmic reticulum, adds the first glucose residue from dolichyl phosphate glucose (Dol-P-Glc) onto the lipid-linked oligosaccharide intermediate Man(9)GlcNAc(2)-PP-Dol to produce Glc(1)Man(9)GlcNAc(2)-PP-Dol. Glc(1)Man(9)GlcNAc(2)-PP-Dol is a substrate for ALG8, the following enzyme in the biosynthetic pathway.</text>
</comment>
<comment type="catalytic activity">
    <reaction evidence="1">
        <text>an alpha-D-Man-(1-&gt;2)-alpha-D-Man-(1-&gt;2)-alpha-D-Man-(1-&gt;3)-[alpha-D-Man-(1-&gt;2)-alpha-D-Man-(1-&gt;3)-[alpha-D-Man-(1-&gt;2)-alpha-D-Man-(1-&gt;6)]-alpha-D-Man-(1-&gt;6)]-beta-D-Man-(1-&gt;4)-beta-D-GlcNAc-(1-&gt;4)-alpha-D-GlcNAc-diphospho-di-trans,poly-cis-dolichol + a di-trans,poly-cis-dolichyl beta-D-glucosyl phosphate = an alpha-D-Glc-(1-&gt;3)-alpha-D-Man-(1-&gt;2)-alpha-D-Man-(1-&gt;2)-alpha-D-Man-(1-&gt;3)-[alpha-D-Man-(1-&gt;2)-alpha-D-Man-(1-&gt;3)-[alpha-D-Man-(1-&gt;2)-alpha-D-Man-(1-&gt;6)]-alpha-D-Man-(1-&gt;6)]-beta-D-Man-(1-&gt;4)-beta-D-GlcNAc-(1-&gt;4)-alpha-D-GlcNAc-diphospho-di-trans,poly-cis-dolichol + a di-trans,poly-cis-dolichyl phosphate + H(+)</text>
        <dbReference type="Rhea" id="RHEA:30635"/>
        <dbReference type="Rhea" id="RHEA-COMP:19498"/>
        <dbReference type="Rhea" id="RHEA-COMP:19502"/>
        <dbReference type="Rhea" id="RHEA-COMP:19520"/>
        <dbReference type="Rhea" id="RHEA-COMP:19521"/>
        <dbReference type="ChEBI" id="CHEBI:15378"/>
        <dbReference type="ChEBI" id="CHEBI:57525"/>
        <dbReference type="ChEBI" id="CHEBI:57683"/>
        <dbReference type="ChEBI" id="CHEBI:132520"/>
        <dbReference type="ChEBI" id="CHEBI:132521"/>
        <dbReference type="EC" id="2.4.1.267"/>
    </reaction>
    <physiologicalReaction direction="left-to-right" evidence="1">
        <dbReference type="Rhea" id="RHEA:30636"/>
    </physiologicalReaction>
</comment>
<comment type="pathway">
    <text evidence="1">Protein modification; protein glycosylation.</text>
</comment>
<comment type="subcellular location">
    <subcellularLocation>
        <location evidence="1">Endoplasmic reticulum membrane</location>
        <topology evidence="2">Multi-pass membrane protein</topology>
    </subcellularLocation>
</comment>
<comment type="similarity">
    <text evidence="4">Belongs to the ALG6/ALG8 glucosyltransferase family.</text>
</comment>
<protein>
    <recommendedName>
        <fullName evidence="1">Dolichyl pyrophosphate Man9GlcNAc2 alpha-1,3-glucosyltransferase</fullName>
        <ecNumber evidence="1">2.4.1.267</ecNumber>
    </recommendedName>
    <alternativeName>
        <fullName evidence="1">Asparagine-linked glycosylation protein 6 homolog</fullName>
    </alternativeName>
    <alternativeName>
        <fullName>Dol-P-Glc:Man(9)GlcNAc(2)-PP-Dol alpha-1,3-glucosyltransferase</fullName>
    </alternativeName>
    <alternativeName>
        <fullName>Dolichyl-P-Glc:Man9GlcNAc2-PP-dolichyl glucosyltransferase</fullName>
    </alternativeName>
</protein>
<evidence type="ECO:0000250" key="1">
    <source>
        <dbReference type="UniProtKB" id="Q9Y672"/>
    </source>
</evidence>
<evidence type="ECO:0000255" key="2"/>
<evidence type="ECO:0000255" key="3">
    <source>
        <dbReference type="PROSITE-ProRule" id="PRU00498"/>
    </source>
</evidence>
<evidence type="ECO:0000305" key="4"/>
<feature type="chain" id="PRO_0000284134" description="Dolichyl pyrophosphate Man9GlcNAc2 alpha-1,3-glucosyltransferase">
    <location>
        <begin position="1"/>
        <end position="507"/>
    </location>
</feature>
<feature type="topological domain" description="Cytoplasmic" evidence="4">
    <location>
        <begin position="1"/>
        <end position="3"/>
    </location>
</feature>
<feature type="transmembrane region" description="Helical" evidence="2">
    <location>
        <begin position="4"/>
        <end position="24"/>
    </location>
</feature>
<feature type="topological domain" description="Lumenal" evidence="4">
    <location>
        <begin position="25"/>
        <end position="114"/>
    </location>
</feature>
<feature type="transmembrane region" description="Helical" evidence="2">
    <location>
        <begin position="115"/>
        <end position="135"/>
    </location>
</feature>
<feature type="topological domain" description="Cytoplasmic" evidence="4">
    <location>
        <begin position="136"/>
        <end position="143"/>
    </location>
</feature>
<feature type="transmembrane region" description="Helical" evidence="2">
    <location>
        <begin position="144"/>
        <end position="164"/>
    </location>
</feature>
<feature type="topological domain" description="Lumenal" evidence="4">
    <location>
        <begin position="165"/>
        <end position="168"/>
    </location>
</feature>
<feature type="transmembrane region" description="Helical" evidence="2">
    <location>
        <begin position="169"/>
        <end position="189"/>
    </location>
</feature>
<feature type="topological domain" description="Cytoplasmic" evidence="4">
    <location>
        <begin position="190"/>
        <end position="226"/>
    </location>
</feature>
<feature type="transmembrane region" description="Helical" evidence="2">
    <location>
        <begin position="227"/>
        <end position="247"/>
    </location>
</feature>
<feature type="topological domain" description="Lumenal" evidence="4">
    <location>
        <begin position="248"/>
        <end position="297"/>
    </location>
</feature>
<feature type="transmembrane region" description="Helical" evidence="2">
    <location>
        <begin position="298"/>
        <end position="318"/>
    </location>
</feature>
<feature type="topological domain" description="Cytoplasmic" evidence="4">
    <location>
        <begin position="319"/>
        <end position="338"/>
    </location>
</feature>
<feature type="transmembrane region" description="Helical" evidence="2">
    <location>
        <begin position="339"/>
        <end position="359"/>
    </location>
</feature>
<feature type="topological domain" description="Lumenal" evidence="4">
    <location>
        <begin position="360"/>
        <end position="361"/>
    </location>
</feature>
<feature type="transmembrane region" description="Helical" evidence="2">
    <location>
        <begin position="362"/>
        <end position="382"/>
    </location>
</feature>
<feature type="topological domain" description="Cytoplasmic" evidence="4">
    <location>
        <begin position="383"/>
        <end position="387"/>
    </location>
</feature>
<feature type="transmembrane region" description="Helical" evidence="2">
    <location>
        <begin position="388"/>
        <end position="408"/>
    </location>
</feature>
<feature type="topological domain" description="Lumenal" evidence="4">
    <location>
        <begin position="409"/>
        <end position="441"/>
    </location>
</feature>
<feature type="transmembrane region" description="Helical" evidence="2">
    <location>
        <begin position="442"/>
        <end position="462"/>
    </location>
</feature>
<feature type="topological domain" description="Cytoplasmic" evidence="4">
    <location>
        <begin position="463"/>
        <end position="473"/>
    </location>
</feature>
<feature type="transmembrane region" description="Helical" evidence="2">
    <location>
        <begin position="474"/>
        <end position="494"/>
    </location>
</feature>
<feature type="topological domain" description="Lumenal" evidence="4">
    <location>
        <begin position="495"/>
        <end position="507"/>
    </location>
</feature>
<feature type="glycosylation site" description="N-linked (GlcNAc...) asparagine" evidence="3">
    <location>
        <position position="59"/>
    </location>
</feature>
<accession>Q802T2</accession>
<organism>
    <name type="scientific">Gallus gallus</name>
    <name type="common">Chicken</name>
    <dbReference type="NCBI Taxonomy" id="9031"/>
    <lineage>
        <taxon>Eukaryota</taxon>
        <taxon>Metazoa</taxon>
        <taxon>Chordata</taxon>
        <taxon>Craniata</taxon>
        <taxon>Vertebrata</taxon>
        <taxon>Euteleostomi</taxon>
        <taxon>Archelosauria</taxon>
        <taxon>Archosauria</taxon>
        <taxon>Dinosauria</taxon>
        <taxon>Saurischia</taxon>
        <taxon>Theropoda</taxon>
        <taxon>Coelurosauria</taxon>
        <taxon>Aves</taxon>
        <taxon>Neognathae</taxon>
        <taxon>Galloanserae</taxon>
        <taxon>Galliformes</taxon>
        <taxon>Phasianidae</taxon>
        <taxon>Phasianinae</taxon>
        <taxon>Gallus</taxon>
    </lineage>
</organism>
<dbReference type="EC" id="2.4.1.267" evidence="1"/>
<dbReference type="EMBL" id="AJ535824">
    <property type="protein sequence ID" value="CAD60191.1"/>
    <property type="molecule type" value="mRNA"/>
</dbReference>
<dbReference type="EMBL" id="AJ719772">
    <property type="protein sequence ID" value="CAG31431.1"/>
    <property type="molecule type" value="mRNA"/>
</dbReference>
<dbReference type="RefSeq" id="NP_989766.1">
    <property type="nucleotide sequence ID" value="NM_204435.2"/>
</dbReference>
<dbReference type="RefSeq" id="XP_025008512.2">
    <property type="nucleotide sequence ID" value="XM_025152744.3"/>
</dbReference>
<dbReference type="RefSeq" id="XP_025008513.2">
    <property type="nucleotide sequence ID" value="XM_025152745.3"/>
</dbReference>
<dbReference type="RefSeq" id="XP_046800193.1">
    <property type="nucleotide sequence ID" value="XM_046944237.1"/>
</dbReference>
<dbReference type="SMR" id="Q802T2"/>
<dbReference type="FunCoup" id="Q802T2">
    <property type="interactions" value="2493"/>
</dbReference>
<dbReference type="STRING" id="9031.ENSGALP00000062276"/>
<dbReference type="CAZy" id="GT57">
    <property type="family name" value="Glycosyltransferase Family 57"/>
</dbReference>
<dbReference type="GlyGen" id="Q802T2">
    <property type="glycosylation" value="1 site"/>
</dbReference>
<dbReference type="PaxDb" id="9031-ENSGALP00000017880"/>
<dbReference type="Ensembl" id="ENSGALT00010059039.1">
    <property type="protein sequence ID" value="ENSGALP00010036003.1"/>
    <property type="gene ID" value="ENSGALG00010024192.1"/>
</dbReference>
<dbReference type="GeneID" id="395078"/>
<dbReference type="KEGG" id="gga:395078"/>
<dbReference type="CTD" id="29929"/>
<dbReference type="VEuPathDB" id="HostDB:geneid_395078"/>
<dbReference type="eggNOG" id="KOG2575">
    <property type="taxonomic scope" value="Eukaryota"/>
</dbReference>
<dbReference type="GeneTree" id="ENSGT00940000153733"/>
<dbReference type="InParanoid" id="Q802T2"/>
<dbReference type="OMA" id="FQVPPMH"/>
<dbReference type="OrthoDB" id="4983at2759"/>
<dbReference type="PhylomeDB" id="Q802T2"/>
<dbReference type="UniPathway" id="UPA00378"/>
<dbReference type="PRO" id="PR:Q802T2"/>
<dbReference type="Proteomes" id="UP000000539">
    <property type="component" value="Chromosome 8"/>
</dbReference>
<dbReference type="GO" id="GO:0005789">
    <property type="term" value="C:endoplasmic reticulum membrane"/>
    <property type="evidence" value="ECO:0000318"/>
    <property type="project" value="GO_Central"/>
</dbReference>
<dbReference type="GO" id="GO:0042281">
    <property type="term" value="F:dolichyl pyrophosphate Man9GlcNAc2 alpha-1,3-glucosyltransferase activity"/>
    <property type="evidence" value="ECO:0000250"/>
    <property type="project" value="UniProtKB"/>
</dbReference>
<dbReference type="GO" id="GO:0006488">
    <property type="term" value="P:dolichol-linked oligosaccharide biosynthetic process"/>
    <property type="evidence" value="ECO:0000250"/>
    <property type="project" value="UniProtKB"/>
</dbReference>
<dbReference type="GO" id="GO:0006487">
    <property type="term" value="P:protein N-linked glycosylation"/>
    <property type="evidence" value="ECO:0000250"/>
    <property type="project" value="UniProtKB"/>
</dbReference>
<dbReference type="InterPro" id="IPR004856">
    <property type="entry name" value="Glyco_trans_ALG6/ALG8"/>
</dbReference>
<dbReference type="PANTHER" id="PTHR12413">
    <property type="entry name" value="DOLICHYL GLYCOSYLTRANSFERASE"/>
    <property type="match status" value="1"/>
</dbReference>
<dbReference type="PANTHER" id="PTHR12413:SF1">
    <property type="entry name" value="DOLICHYL PYROPHOSPHATE MAN9GLCNAC2 ALPHA-1,3-GLUCOSYLTRANSFERASE"/>
    <property type="match status" value="1"/>
</dbReference>
<dbReference type="Pfam" id="PF03155">
    <property type="entry name" value="Alg6_Alg8"/>
    <property type="match status" value="1"/>
</dbReference>
<keyword id="KW-0256">Endoplasmic reticulum</keyword>
<keyword id="KW-0325">Glycoprotein</keyword>
<keyword id="KW-0328">Glycosyltransferase</keyword>
<keyword id="KW-0472">Membrane</keyword>
<keyword id="KW-1185">Reference proteome</keyword>
<keyword id="KW-0808">Transferase</keyword>
<keyword id="KW-0812">Transmembrane</keyword>
<keyword id="KW-1133">Transmembrane helix</keyword>
<reference key="1">
    <citation type="submission" date="2003-01" db="EMBL/GenBank/DDBJ databases">
        <title>A novel function for mannosyltransferases.</title>
        <authorList>
            <person name="Oriol R."/>
            <person name="Martinez-Duncker R.I."/>
            <person name="Mollicone R."/>
            <person name="Chantret I."/>
            <person name="Codogno P."/>
        </authorList>
    </citation>
    <scope>NUCLEOTIDE SEQUENCE [MRNA]</scope>
</reference>
<reference key="2">
    <citation type="journal article" date="2005" name="Genome Biol.">
        <title>Full-length cDNAs from chicken bursal lymphocytes to facilitate gene function analysis.</title>
        <authorList>
            <person name="Caldwell R.B."/>
            <person name="Kierzek A.M."/>
            <person name="Arakawa H."/>
            <person name="Bezzubov Y."/>
            <person name="Zaim J."/>
            <person name="Fiedler P."/>
            <person name="Kutter S."/>
            <person name="Blagodatski A."/>
            <person name="Kostovska D."/>
            <person name="Koter M."/>
            <person name="Plachy J."/>
            <person name="Carninci P."/>
            <person name="Hayashizaki Y."/>
            <person name="Buerstedde J.-M."/>
        </authorList>
    </citation>
    <scope>NUCLEOTIDE SEQUENCE [LARGE SCALE MRNA]</scope>
    <source>
        <strain>CB</strain>
        <tissue>Bursa of Fabricius</tissue>
    </source>
</reference>
<name>ALG6_CHICK</name>
<proteinExistence type="evidence at transcript level"/>
<sequence length="507" mass="57437">MEKWSLMTITVLLALTVRWTVSLGSYSGAGKPPMYGDYEAQRHWQEVTYNLPIRQWYFNTSDNNLLYWGLDYPPLTAYHSFLCAYVAKLINPDWIALHTSRGYESQSHKLFMRTTVFVADLLIYIPAVILYCCSLKETSTKKKVSSALCILLYPGLILIDHGHFQYNSVSLGFALWGVLCLSYDWDLLGSAAFCLALNYKQMELYHSLPFFCYLLGKCFKKGLKGKGLLLLIKLAGTVVASFAVCWLPFCTDVEQIMQVLRRLFPIDRGLFEDKVANIWCSLSVLIKIKNVVSPQTQLKLSFAVTFLSLLPTCIKLTVQPSLRGFKLTLVSCALSFFLFSFQVHEKSILLVSVPVCLIINEVPFMATWFLLVSTFSMLPLLLKDGLLLPYAVTTLAFLSACVASFAIFEKTSAKDLQLKPFSQSLRGYVSWFKLFPKIVRSLFLLSVTLMGVLSVMSAAVHPPQRFPDLFPVSVSSISCLHFLFFLVYFNVIILWDSKNSRNQKKVS</sequence>